<sequence length="186" mass="19841">MTSVAQRQAQPAQPSTSQTAAPTRTQTETSSPAILRLRGAHSNGRSVQWRSDVVDNEGLGRKKSKVCCIYHRPKGVDESSDDSSSSSDSSSSSDSDSDPEPDQDKRITSGGGSSGRGHRHSHDHDHDGREGGCNHDHGRGRKHGNKGKKTERRPSPNAYEKMPKYKPKDGGAGPSNSETQGPGGSK</sequence>
<accession>Q9P6B0</accession>
<name>YPI1_NEUCR</name>
<protein>
    <recommendedName>
        <fullName>Type 1 phosphatases regulator ypi-1</fullName>
    </recommendedName>
</protein>
<gene>
    <name type="primary">ypi-1</name>
    <name type="ORF">B1D1.100</name>
    <name type="ORF">NCU01670</name>
</gene>
<evidence type="ECO:0000250" key="1"/>
<evidence type="ECO:0000256" key="2">
    <source>
        <dbReference type="SAM" id="MobiDB-lite"/>
    </source>
</evidence>
<evidence type="ECO:0000305" key="3"/>
<reference key="1">
    <citation type="journal article" date="2003" name="Nucleic Acids Res.">
        <title>What's in the genome of a filamentous fungus? Analysis of the Neurospora genome sequence.</title>
        <authorList>
            <person name="Mannhaupt G."/>
            <person name="Montrone C."/>
            <person name="Haase D."/>
            <person name="Mewes H.-W."/>
            <person name="Aign V."/>
            <person name="Hoheisel J.D."/>
            <person name="Fartmann B."/>
            <person name="Nyakatura G."/>
            <person name="Kempken F."/>
            <person name="Maier J."/>
            <person name="Schulte U."/>
        </authorList>
    </citation>
    <scope>NUCLEOTIDE SEQUENCE [LARGE SCALE GENOMIC DNA]</scope>
    <source>
        <strain>ATCC 24698 / 74-OR23-1A / CBS 708.71 / DSM 1257 / FGSC 987</strain>
    </source>
</reference>
<reference key="2">
    <citation type="journal article" date="2003" name="Nature">
        <title>The genome sequence of the filamentous fungus Neurospora crassa.</title>
        <authorList>
            <person name="Galagan J.E."/>
            <person name="Calvo S.E."/>
            <person name="Borkovich K.A."/>
            <person name="Selker E.U."/>
            <person name="Read N.D."/>
            <person name="Jaffe D.B."/>
            <person name="FitzHugh W."/>
            <person name="Ma L.-J."/>
            <person name="Smirnov S."/>
            <person name="Purcell S."/>
            <person name="Rehman B."/>
            <person name="Elkins T."/>
            <person name="Engels R."/>
            <person name="Wang S."/>
            <person name="Nielsen C.B."/>
            <person name="Butler J."/>
            <person name="Endrizzi M."/>
            <person name="Qui D."/>
            <person name="Ianakiev P."/>
            <person name="Bell-Pedersen D."/>
            <person name="Nelson M.A."/>
            <person name="Werner-Washburne M."/>
            <person name="Selitrennikoff C.P."/>
            <person name="Kinsey J.A."/>
            <person name="Braun E.L."/>
            <person name="Zelter A."/>
            <person name="Schulte U."/>
            <person name="Kothe G.O."/>
            <person name="Jedd G."/>
            <person name="Mewes H.-W."/>
            <person name="Staben C."/>
            <person name="Marcotte E."/>
            <person name="Greenberg D."/>
            <person name="Roy A."/>
            <person name="Foley K."/>
            <person name="Naylor J."/>
            <person name="Stange-Thomann N."/>
            <person name="Barrett R."/>
            <person name="Gnerre S."/>
            <person name="Kamal M."/>
            <person name="Kamvysselis M."/>
            <person name="Mauceli E.W."/>
            <person name="Bielke C."/>
            <person name="Rudd S."/>
            <person name="Frishman D."/>
            <person name="Krystofova S."/>
            <person name="Rasmussen C."/>
            <person name="Metzenberg R.L."/>
            <person name="Perkins D.D."/>
            <person name="Kroken S."/>
            <person name="Cogoni C."/>
            <person name="Macino G."/>
            <person name="Catcheside D.E.A."/>
            <person name="Li W."/>
            <person name="Pratt R.J."/>
            <person name="Osmani S.A."/>
            <person name="DeSouza C.P.C."/>
            <person name="Glass N.L."/>
            <person name="Orbach M.J."/>
            <person name="Berglund J.A."/>
            <person name="Voelker R."/>
            <person name="Yarden O."/>
            <person name="Plamann M."/>
            <person name="Seiler S."/>
            <person name="Dunlap J.C."/>
            <person name="Radford A."/>
            <person name="Aramayo R."/>
            <person name="Natvig D.O."/>
            <person name="Alex L.A."/>
            <person name="Mannhaupt G."/>
            <person name="Ebbole D.J."/>
            <person name="Freitag M."/>
            <person name="Paulsen I."/>
            <person name="Sachs M.S."/>
            <person name="Lander E.S."/>
            <person name="Nusbaum C."/>
            <person name="Birren B.W."/>
        </authorList>
    </citation>
    <scope>NUCLEOTIDE SEQUENCE [LARGE SCALE GENOMIC DNA]</scope>
    <source>
        <strain>ATCC 24698 / 74-OR23-1A / CBS 708.71 / DSM 1257 / FGSC 987</strain>
    </source>
</reference>
<feature type="chain" id="PRO_0000333480" description="Type 1 phosphatases regulator ypi-1">
    <location>
        <begin position="1"/>
        <end position="186"/>
    </location>
</feature>
<feature type="region of interest" description="Disordered" evidence="2">
    <location>
        <begin position="1"/>
        <end position="186"/>
    </location>
</feature>
<feature type="compositionally biased region" description="Polar residues" evidence="2">
    <location>
        <begin position="1"/>
        <end position="32"/>
    </location>
</feature>
<feature type="compositionally biased region" description="Low complexity" evidence="2">
    <location>
        <begin position="82"/>
        <end position="94"/>
    </location>
</feature>
<feature type="compositionally biased region" description="Basic and acidic residues" evidence="2">
    <location>
        <begin position="122"/>
        <end position="137"/>
    </location>
</feature>
<feature type="compositionally biased region" description="Basic residues" evidence="2">
    <location>
        <begin position="138"/>
        <end position="151"/>
    </location>
</feature>
<proteinExistence type="inferred from homology"/>
<dbReference type="EMBL" id="AL355927">
    <property type="protein sequence ID" value="CAB91259.2"/>
    <property type="molecule type" value="Genomic_DNA"/>
</dbReference>
<dbReference type="EMBL" id="CM002237">
    <property type="protein sequence ID" value="EAA27640.1"/>
    <property type="molecule type" value="Genomic_DNA"/>
</dbReference>
<dbReference type="PIR" id="T49356">
    <property type="entry name" value="T49356"/>
</dbReference>
<dbReference type="RefSeq" id="XP_956876.1">
    <property type="nucleotide sequence ID" value="XM_951783.2"/>
</dbReference>
<dbReference type="SMR" id="Q9P6B0"/>
<dbReference type="STRING" id="367110.Q9P6B0"/>
<dbReference type="PaxDb" id="5141-EFNCRP00000001913"/>
<dbReference type="EnsemblFungi" id="EAA27640">
    <property type="protein sequence ID" value="EAA27640"/>
    <property type="gene ID" value="NCU01670"/>
</dbReference>
<dbReference type="GeneID" id="3873038"/>
<dbReference type="KEGG" id="ncr:NCU01670"/>
<dbReference type="VEuPathDB" id="FungiDB:NCU01670"/>
<dbReference type="HOGENOM" id="CLU_098333_0_1_1"/>
<dbReference type="InParanoid" id="Q9P6B0"/>
<dbReference type="OrthoDB" id="307488at2759"/>
<dbReference type="Proteomes" id="UP000001805">
    <property type="component" value="Chromosome 6, Linkage Group II"/>
</dbReference>
<dbReference type="GO" id="GO:0005634">
    <property type="term" value="C:nucleus"/>
    <property type="evidence" value="ECO:0000318"/>
    <property type="project" value="GO_Central"/>
</dbReference>
<dbReference type="GO" id="GO:0008157">
    <property type="term" value="F:protein phosphatase 1 binding"/>
    <property type="evidence" value="ECO:0000318"/>
    <property type="project" value="GO_Central"/>
</dbReference>
<dbReference type="GO" id="GO:0004865">
    <property type="term" value="F:protein serine/threonine phosphatase inhibitor activity"/>
    <property type="evidence" value="ECO:0000318"/>
    <property type="project" value="GO_Central"/>
</dbReference>
<dbReference type="InterPro" id="IPR011107">
    <property type="entry name" value="PPI_Ypi1"/>
</dbReference>
<dbReference type="PANTHER" id="PTHR20835:SF0">
    <property type="entry name" value="E3 UBIQUITIN-PROTEIN LIGASE PPP1R11"/>
    <property type="match status" value="1"/>
</dbReference>
<dbReference type="PANTHER" id="PTHR20835">
    <property type="entry name" value="E3 UBIQUITIN-PROTEIN LIGASE PPP1R11-RELATED"/>
    <property type="match status" value="1"/>
</dbReference>
<dbReference type="Pfam" id="PF07491">
    <property type="entry name" value="PPI_Ypi1"/>
    <property type="match status" value="1"/>
</dbReference>
<organism>
    <name type="scientific">Neurospora crassa (strain ATCC 24698 / 74-OR23-1A / CBS 708.71 / DSM 1257 / FGSC 987)</name>
    <dbReference type="NCBI Taxonomy" id="367110"/>
    <lineage>
        <taxon>Eukaryota</taxon>
        <taxon>Fungi</taxon>
        <taxon>Dikarya</taxon>
        <taxon>Ascomycota</taxon>
        <taxon>Pezizomycotina</taxon>
        <taxon>Sordariomycetes</taxon>
        <taxon>Sordariomycetidae</taxon>
        <taxon>Sordariales</taxon>
        <taxon>Sordariaceae</taxon>
        <taxon>Neurospora</taxon>
    </lineage>
</organism>
<keyword id="KW-0539">Nucleus</keyword>
<keyword id="KW-1185">Reference proteome</keyword>
<comment type="function">
    <text evidence="1">Regulator of type 1 phosphatases which maintains protein phosphatase activity under strict control.</text>
</comment>
<comment type="subcellular location">
    <subcellularLocation>
        <location evidence="1">Nucleus</location>
    </subcellularLocation>
</comment>
<comment type="similarity">
    <text evidence="3">Belongs to the YPI1 family.</text>
</comment>